<gene>
    <name type="primary">Lcp2</name>
</gene>
<accession>Q60787</accession>
<accession>Q922M0</accession>
<sequence>MALKNVPFRSEVLAWNSDNLADYFRKLNYRDCEKAVKKYHIDGARFLNLTENDIQKFPKLRMPLLSKLSQDINKNEERRSIFTRKPQIPRFLEETESHEEDDGGWSSFEDDYESPNDDDPDGEDDGDYESPNEEEQALVDDAADYEPPPSNNEEALQSSILPPNSFHNTNSMYIDRPPTGKVSQQPPVPPLRPKPALPPLPTGRNHSPLSPPHPNHEEPSRSGNNKTAKLPAPSIDRSTKPPLDRSLAPLDREPFILGKKPPFSDKPSAPLGREHLPKIQKPPLPPAMDRHERNERLGPVTTRKPPVPRHGRGPDRRENDEDDVHQRPLPQPSLPSMSSNTFPSRSVQPSSKNTFPLAHMPGAFSESNIGFQQSASLPPYFSQGPGNRPPLRSEGRNLPLPVPNRPQPPSPGEEETPLDEEWYVSYITRPEAEAALRKINQDGTFLVRDSSKKTANNPYVLMVLYKDKVYNIQIRYQEESQVYLLGTGLRGKEDFLSVSDIIDYFRKMPLLLIDGKNRGSRYQCTLTHAAGCL</sequence>
<feature type="chain" id="PRO_0000084369" description="Lymphocyte cytosolic protein 2">
    <location>
        <begin position="1"/>
        <end position="533"/>
    </location>
</feature>
<feature type="domain" description="SAM">
    <location>
        <begin position="12"/>
        <end position="78"/>
    </location>
</feature>
<feature type="domain" description="SH2" evidence="3">
    <location>
        <begin position="422"/>
        <end position="530"/>
    </location>
</feature>
<feature type="region of interest" description="Disordered" evidence="4">
    <location>
        <begin position="78"/>
        <end position="359"/>
    </location>
</feature>
<feature type="region of interest" description="Disordered" evidence="4">
    <location>
        <begin position="374"/>
        <end position="419"/>
    </location>
</feature>
<feature type="compositionally biased region" description="Acidic residues" evidence="4">
    <location>
        <begin position="94"/>
        <end position="144"/>
    </location>
</feature>
<feature type="compositionally biased region" description="Polar residues" evidence="4">
    <location>
        <begin position="151"/>
        <end position="172"/>
    </location>
</feature>
<feature type="compositionally biased region" description="Pro residues" evidence="4">
    <location>
        <begin position="186"/>
        <end position="201"/>
    </location>
</feature>
<feature type="compositionally biased region" description="Polar residues" evidence="4">
    <location>
        <begin position="340"/>
        <end position="354"/>
    </location>
</feature>
<feature type="compositionally biased region" description="Pro residues" evidence="4">
    <location>
        <begin position="400"/>
        <end position="411"/>
    </location>
</feature>
<feature type="modified residue" description="Phosphotyrosine" evidence="12">
    <location>
        <position position="23"/>
    </location>
</feature>
<feature type="modified residue" description="Phosphoserine" evidence="2">
    <location>
        <position position="207"/>
    </location>
</feature>
<feature type="modified residue" description="Phosphoserine" evidence="13">
    <location>
        <position position="210"/>
    </location>
</feature>
<feature type="modified residue" description="Phosphoserine" evidence="2">
    <location>
        <position position="376"/>
    </location>
</feature>
<feature type="modified residue" description="Phosphoserine" evidence="2">
    <location>
        <position position="410"/>
    </location>
</feature>
<feature type="sequence conflict" description="In Ref. 1; AAC52189." evidence="11" ref="1">
    <original>P</original>
    <variation>S</variation>
    <location>
        <position position="306"/>
    </location>
</feature>
<feature type="helix" evidence="14">
    <location>
        <begin position="237"/>
        <end position="239"/>
    </location>
</feature>
<proteinExistence type="evidence at protein level"/>
<comment type="function">
    <text evidence="2 6">Adapter protein primarily involved in signaling pathways within T-cells, as well as other immune cells such as platelets, mast cells, and natural killer (NK) cells (PubMed:10660534). Plays a crucial role for transducing signal from the T-cell receptor (TCR) after antigen recognition leading to T-cell activation. Mechanistically, once phosphorylated by the kinase ZAP70, mediates interactions with the guanine-nucleotide exchange factor VAV1, the adapter protein NCK and the kinase ITK. In turn, stimulates the activation of PKC-theta/PRKCQ and NF-kappa-B transcriptional activity in response to CD3 and CD28 costimulation. Also plays an essential role in AGER-induced signaling pathways including p38 MAPK and ERK1/2 activation leading to cytokine release and pro-inflammatory responses.</text>
</comment>
<comment type="subunit">
    <text evidence="2 5 7 8 9 10">Interacts with SLA (PubMed:10662792). Interacts with CBLB (PubMed:10646608). Interacts with GRB2 (PubMed:7706237). Interacts with SHB. Interacts with PRAM1. Interacts (via SH2 domain) with CD6 (via tyrosine phosphorylated C-terminus) (PubMed:16914752, PubMed:24584089). Interacts with FYB1 and the phosphorylated form of FYB2. Interacts with 14-3-3 adapter/YWHAZ; this phosphorylation leads to YWHAZ proteolytic degradation. Interacts with VAV1; this interaction plays a role in TCR-mediated cytokine production. Interacts with AGER; this interaction plays an important role in AGER-mediated pro-inflammatory responses and cytokine release (By similarity).</text>
</comment>
<comment type="interaction">
    <interactant intactId="EBI-5324248">
        <id>Q60787</id>
    </interactant>
    <interactant intactId="EBI-12601992">
        <id>Q61003</id>
        <label>Cd6</label>
    </interactant>
    <organismsDiffer>false</organismsDiffer>
    <experiments>9</experiments>
</comment>
<comment type="interaction">
    <interactant intactId="EBI-5324248">
        <id>Q60787</id>
    </interactant>
    <interactant intactId="EBI-7353747">
        <id>O35601</id>
        <label>Fyb1</label>
    </interactant>
    <organismsDiffer>false</organismsDiffer>
    <experiments>7</experiments>
</comment>
<comment type="interaction">
    <interactant intactId="EBI-5324248">
        <id>Q60787</id>
    </interactant>
    <interactant intactId="EBI-642151">
        <id>O89100</id>
        <label>Grap2</label>
    </interactant>
    <organismsDiffer>false</organismsDiffer>
    <experiments>7</experiments>
</comment>
<comment type="interaction">
    <interactant intactId="EBI-5324248">
        <id>Q60787</id>
    </interactant>
    <interactant intactId="EBI-6390034">
        <id>O54957</id>
        <label>Lat</label>
    </interactant>
    <organismsDiffer>false</organismsDiffer>
    <experiments>8</experiments>
</comment>
<comment type="subcellular location">
    <subcellularLocation>
        <location evidence="11">Cytoplasm</location>
    </subcellularLocation>
</comment>
<comment type="tissue specificity">
    <text>Highly expressed in spleen, thymus, and peripheral blood leukocytes.</text>
</comment>
<comment type="domain">
    <text evidence="1">The SH2 domain mediates interaction with SHB.</text>
</comment>
<comment type="PTM">
    <text evidence="2">Phosphorylated after T-cell receptor activation by ZAP70, ITK and TXK, which leads to the up-regulation of Th1 preferred cytokine IL-2. SYK-dependent phosphorylation is required for recruitment of PI3K signaling components.</text>
</comment>
<organism>
    <name type="scientific">Mus musculus</name>
    <name type="common">Mouse</name>
    <dbReference type="NCBI Taxonomy" id="10090"/>
    <lineage>
        <taxon>Eukaryota</taxon>
        <taxon>Metazoa</taxon>
        <taxon>Chordata</taxon>
        <taxon>Craniata</taxon>
        <taxon>Vertebrata</taxon>
        <taxon>Euteleostomi</taxon>
        <taxon>Mammalia</taxon>
        <taxon>Eutheria</taxon>
        <taxon>Euarchontoglires</taxon>
        <taxon>Glires</taxon>
        <taxon>Rodentia</taxon>
        <taxon>Myomorpha</taxon>
        <taxon>Muroidea</taxon>
        <taxon>Muridae</taxon>
        <taxon>Murinae</taxon>
        <taxon>Mus</taxon>
        <taxon>Mus</taxon>
    </lineage>
</organism>
<protein>
    <recommendedName>
        <fullName>Lymphocyte cytosolic protein 2</fullName>
    </recommendedName>
    <alternativeName>
        <fullName>SH2 domain-containing leukocyte protein of 76 kDa</fullName>
    </alternativeName>
    <alternativeName>
        <fullName>SLP-76 tyrosine phosphoprotein</fullName>
        <shortName>SLP76</shortName>
    </alternativeName>
</protein>
<reference key="1">
    <citation type="journal article" date="1995" name="J. Biol. Chem.">
        <title>Molecular cloning of SLP-76, a 76-kDa tyrosine phosphoprotein associated with Grb2 in T cells.</title>
        <authorList>
            <person name="Jackman J.K."/>
            <person name="Motto D.G."/>
            <person name="Sun Q."/>
            <person name="Tanemoto M."/>
            <person name="Turck C.W."/>
            <person name="Peltz G.A."/>
            <person name="Koretzky G.A."/>
            <person name="Findell P.R."/>
        </authorList>
    </citation>
    <scope>NUCLEOTIDE SEQUENCE [MRNA]</scope>
    <scope>INTERACTION WITH GRB2</scope>
    <source>
        <tissue>T-cell lymphoma</tissue>
    </source>
</reference>
<reference key="2">
    <citation type="journal article" date="2005" name="Science">
        <title>The transcriptional landscape of the mammalian genome.</title>
        <authorList>
            <person name="Carninci P."/>
            <person name="Kasukawa T."/>
            <person name="Katayama S."/>
            <person name="Gough J."/>
            <person name="Frith M.C."/>
            <person name="Maeda N."/>
            <person name="Oyama R."/>
            <person name="Ravasi T."/>
            <person name="Lenhard B."/>
            <person name="Wells C."/>
            <person name="Kodzius R."/>
            <person name="Shimokawa K."/>
            <person name="Bajic V.B."/>
            <person name="Brenner S.E."/>
            <person name="Batalov S."/>
            <person name="Forrest A.R."/>
            <person name="Zavolan M."/>
            <person name="Davis M.J."/>
            <person name="Wilming L.G."/>
            <person name="Aidinis V."/>
            <person name="Allen J.E."/>
            <person name="Ambesi-Impiombato A."/>
            <person name="Apweiler R."/>
            <person name="Aturaliya R.N."/>
            <person name="Bailey T.L."/>
            <person name="Bansal M."/>
            <person name="Baxter L."/>
            <person name="Beisel K.W."/>
            <person name="Bersano T."/>
            <person name="Bono H."/>
            <person name="Chalk A.M."/>
            <person name="Chiu K.P."/>
            <person name="Choudhary V."/>
            <person name="Christoffels A."/>
            <person name="Clutterbuck D.R."/>
            <person name="Crowe M.L."/>
            <person name="Dalla E."/>
            <person name="Dalrymple B.P."/>
            <person name="de Bono B."/>
            <person name="Della Gatta G."/>
            <person name="di Bernardo D."/>
            <person name="Down T."/>
            <person name="Engstrom P."/>
            <person name="Fagiolini M."/>
            <person name="Faulkner G."/>
            <person name="Fletcher C.F."/>
            <person name="Fukushima T."/>
            <person name="Furuno M."/>
            <person name="Futaki S."/>
            <person name="Gariboldi M."/>
            <person name="Georgii-Hemming P."/>
            <person name="Gingeras T.R."/>
            <person name="Gojobori T."/>
            <person name="Green R.E."/>
            <person name="Gustincich S."/>
            <person name="Harbers M."/>
            <person name="Hayashi Y."/>
            <person name="Hensch T.K."/>
            <person name="Hirokawa N."/>
            <person name="Hill D."/>
            <person name="Huminiecki L."/>
            <person name="Iacono M."/>
            <person name="Ikeo K."/>
            <person name="Iwama A."/>
            <person name="Ishikawa T."/>
            <person name="Jakt M."/>
            <person name="Kanapin A."/>
            <person name="Katoh M."/>
            <person name="Kawasawa Y."/>
            <person name="Kelso J."/>
            <person name="Kitamura H."/>
            <person name="Kitano H."/>
            <person name="Kollias G."/>
            <person name="Krishnan S.P."/>
            <person name="Kruger A."/>
            <person name="Kummerfeld S.K."/>
            <person name="Kurochkin I.V."/>
            <person name="Lareau L.F."/>
            <person name="Lazarevic D."/>
            <person name="Lipovich L."/>
            <person name="Liu J."/>
            <person name="Liuni S."/>
            <person name="McWilliam S."/>
            <person name="Madan Babu M."/>
            <person name="Madera M."/>
            <person name="Marchionni L."/>
            <person name="Matsuda H."/>
            <person name="Matsuzawa S."/>
            <person name="Miki H."/>
            <person name="Mignone F."/>
            <person name="Miyake S."/>
            <person name="Morris K."/>
            <person name="Mottagui-Tabar S."/>
            <person name="Mulder N."/>
            <person name="Nakano N."/>
            <person name="Nakauchi H."/>
            <person name="Ng P."/>
            <person name="Nilsson R."/>
            <person name="Nishiguchi S."/>
            <person name="Nishikawa S."/>
            <person name="Nori F."/>
            <person name="Ohara O."/>
            <person name="Okazaki Y."/>
            <person name="Orlando V."/>
            <person name="Pang K.C."/>
            <person name="Pavan W.J."/>
            <person name="Pavesi G."/>
            <person name="Pesole G."/>
            <person name="Petrovsky N."/>
            <person name="Piazza S."/>
            <person name="Reed J."/>
            <person name="Reid J.F."/>
            <person name="Ring B.Z."/>
            <person name="Ringwald M."/>
            <person name="Rost B."/>
            <person name="Ruan Y."/>
            <person name="Salzberg S.L."/>
            <person name="Sandelin A."/>
            <person name="Schneider C."/>
            <person name="Schoenbach C."/>
            <person name="Sekiguchi K."/>
            <person name="Semple C.A."/>
            <person name="Seno S."/>
            <person name="Sessa L."/>
            <person name="Sheng Y."/>
            <person name="Shibata Y."/>
            <person name="Shimada H."/>
            <person name="Shimada K."/>
            <person name="Silva D."/>
            <person name="Sinclair B."/>
            <person name="Sperling S."/>
            <person name="Stupka E."/>
            <person name="Sugiura K."/>
            <person name="Sultana R."/>
            <person name="Takenaka Y."/>
            <person name="Taki K."/>
            <person name="Tammoja K."/>
            <person name="Tan S.L."/>
            <person name="Tang S."/>
            <person name="Taylor M.S."/>
            <person name="Tegner J."/>
            <person name="Teichmann S.A."/>
            <person name="Ueda H.R."/>
            <person name="van Nimwegen E."/>
            <person name="Verardo R."/>
            <person name="Wei C.L."/>
            <person name="Yagi K."/>
            <person name="Yamanishi H."/>
            <person name="Zabarovsky E."/>
            <person name="Zhu S."/>
            <person name="Zimmer A."/>
            <person name="Hide W."/>
            <person name="Bult C."/>
            <person name="Grimmond S.M."/>
            <person name="Teasdale R.D."/>
            <person name="Liu E.T."/>
            <person name="Brusic V."/>
            <person name="Quackenbush J."/>
            <person name="Wahlestedt C."/>
            <person name="Mattick J.S."/>
            <person name="Hume D.A."/>
            <person name="Kai C."/>
            <person name="Sasaki D."/>
            <person name="Tomaru Y."/>
            <person name="Fukuda S."/>
            <person name="Kanamori-Katayama M."/>
            <person name="Suzuki M."/>
            <person name="Aoki J."/>
            <person name="Arakawa T."/>
            <person name="Iida J."/>
            <person name="Imamura K."/>
            <person name="Itoh M."/>
            <person name="Kato T."/>
            <person name="Kawaji H."/>
            <person name="Kawagashira N."/>
            <person name="Kawashima T."/>
            <person name="Kojima M."/>
            <person name="Kondo S."/>
            <person name="Konno H."/>
            <person name="Nakano K."/>
            <person name="Ninomiya N."/>
            <person name="Nishio T."/>
            <person name="Okada M."/>
            <person name="Plessy C."/>
            <person name="Shibata K."/>
            <person name="Shiraki T."/>
            <person name="Suzuki S."/>
            <person name="Tagami M."/>
            <person name="Waki K."/>
            <person name="Watahiki A."/>
            <person name="Okamura-Oho Y."/>
            <person name="Suzuki H."/>
            <person name="Kawai J."/>
            <person name="Hayashizaki Y."/>
        </authorList>
    </citation>
    <scope>NUCLEOTIDE SEQUENCE [LARGE SCALE MRNA]</scope>
    <source>
        <strain>C57BL/6J</strain>
        <strain>NOD</strain>
        <tissue>Bone</tissue>
    </source>
</reference>
<reference key="3">
    <citation type="submission" date="2005-09" db="EMBL/GenBank/DDBJ databases">
        <authorList>
            <person name="Mural R.J."/>
            <person name="Adams M.D."/>
            <person name="Myers E.W."/>
            <person name="Smith H.O."/>
            <person name="Venter J.C."/>
        </authorList>
    </citation>
    <scope>NUCLEOTIDE SEQUENCE [LARGE SCALE GENOMIC DNA]</scope>
</reference>
<reference key="4">
    <citation type="journal article" date="2004" name="Genome Res.">
        <title>The status, quality, and expansion of the NIH full-length cDNA project: the Mammalian Gene Collection (MGC).</title>
        <authorList>
            <consortium name="The MGC Project Team"/>
        </authorList>
    </citation>
    <scope>NUCLEOTIDE SEQUENCE [LARGE SCALE MRNA]</scope>
    <source>
        <strain>FVB/N</strain>
        <tissue>Mammary tumor</tissue>
    </source>
</reference>
<reference key="5">
    <citation type="journal article" date="2000" name="J. Biol. Chem.">
        <title>Resting lymphocyte kinase (Rlk/Txk) targets lymphoid adaptor SLP-76 in the cooperative activation of interleukin-2 transcription in T-cells.</title>
        <authorList>
            <person name="Schneider H."/>
            <person name="Guerette B."/>
            <person name="Guntermann C."/>
            <person name="Rudd C.E."/>
        </authorList>
    </citation>
    <scope>FUNCTION</scope>
    <scope>PHOSPHORYLATION BY TXK</scope>
</reference>
<reference key="6">
    <citation type="journal article" date="2000" name="J. Exp. Med.">
        <title>Src-like adaptor protein (SLAP) is a negative regulator of T cell receptor signaling.</title>
        <authorList>
            <person name="Sosinowski T."/>
            <person name="Pandey A."/>
            <person name="Dixit V.M."/>
            <person name="Weiss A."/>
        </authorList>
    </citation>
    <scope>INTERACTION WITH SLA</scope>
</reference>
<reference key="7">
    <citation type="journal article" date="2000" name="Nature">
        <title>Negative regulation of lymphocyte activation and autoimmunity by the molecular adaptor Cbl-b.</title>
        <authorList>
            <person name="Bachmaier K."/>
            <person name="Krawczyk C."/>
            <person name="Kozieradzki I."/>
            <person name="Kong Y.-Y."/>
            <person name="Sasaki T."/>
            <person name="Oliveira-dos-Santos A."/>
            <person name="Mariathasan S."/>
            <person name="Bouchard D."/>
            <person name="Wakeham A."/>
            <person name="Itie A."/>
            <person name="Le J."/>
            <person name="Ohashi P.S."/>
            <person name="Sarosi I."/>
            <person name="Nishina H."/>
            <person name="Lipkowitz S."/>
            <person name="Penninger J.M."/>
        </authorList>
    </citation>
    <scope>INTERACTION WITH CBLB</scope>
</reference>
<reference key="8">
    <citation type="journal article" date="2006" name="Mol. Cell. Biol.">
        <title>CD6 regulates T-cell responses through activation-dependent recruitment of the positive regulator SLP-76.</title>
        <authorList>
            <person name="Hassan N.J."/>
            <person name="Simmonds S.J."/>
            <person name="Clarkson N.G."/>
            <person name="Hanrahan S."/>
            <person name="Puklavec M.J."/>
            <person name="Bomb M."/>
            <person name="Barclay A.N."/>
            <person name="Brown M.H."/>
        </authorList>
    </citation>
    <scope>INTERACTION WITH CD6</scope>
</reference>
<reference key="9">
    <citation type="journal article" date="2007" name="J. Immunol.">
        <title>Quantitative time-resolved phosphoproteomic analysis of mast cell signaling.</title>
        <authorList>
            <person name="Cao L."/>
            <person name="Yu K."/>
            <person name="Banh C."/>
            <person name="Nguyen V."/>
            <person name="Ritz A."/>
            <person name="Raphael B.J."/>
            <person name="Kawakami Y."/>
            <person name="Kawakami T."/>
            <person name="Salomon A.R."/>
        </authorList>
    </citation>
    <scope>PHOSPHORYLATION [LARGE SCALE ANALYSIS] AT TYR-23</scope>
    <scope>IDENTIFICATION BY MASS SPECTROMETRY [LARGE SCALE ANALYSIS]</scope>
    <source>
        <tissue>Mast cell</tissue>
    </source>
</reference>
<reference key="10">
    <citation type="journal article" date="2009" name="Immunity">
        <title>The phagosomal proteome in interferon-gamma-activated macrophages.</title>
        <authorList>
            <person name="Trost M."/>
            <person name="English L."/>
            <person name="Lemieux S."/>
            <person name="Courcelles M."/>
            <person name="Desjardins M."/>
            <person name="Thibault P."/>
        </authorList>
    </citation>
    <scope>PHOSPHORYLATION [LARGE SCALE ANALYSIS] AT SER-210</scope>
    <scope>IDENTIFICATION BY MASS SPECTROMETRY [LARGE SCALE ANALYSIS]</scope>
</reference>
<reference key="11">
    <citation type="journal article" date="2010" name="Cell">
        <title>A tissue-specific atlas of mouse protein phosphorylation and expression.</title>
        <authorList>
            <person name="Huttlin E.L."/>
            <person name="Jedrychowski M.P."/>
            <person name="Elias J.E."/>
            <person name="Goswami T."/>
            <person name="Rad R."/>
            <person name="Beausoleil S.A."/>
            <person name="Villen J."/>
            <person name="Haas W."/>
            <person name="Sowa M.E."/>
            <person name="Gygi S.P."/>
        </authorList>
    </citation>
    <scope>IDENTIFICATION BY MASS SPECTROMETRY [LARGE SCALE ANALYSIS]</scope>
    <source>
        <tissue>Spleen</tissue>
    </source>
</reference>
<reference key="12">
    <citation type="journal article" date="2014" name="Nat. Immunol.">
        <title>Quantitative proteomics analysis of signalosome dynamics in primary T cells identifies the surface receptor CD6 as a Lat adaptor-independent TCR signaling hub.</title>
        <authorList>
            <person name="Roncagalli R."/>
            <person name="Hauri S."/>
            <person name="Fiore F."/>
            <person name="Liang Y."/>
            <person name="Chen Z."/>
            <person name="Sansoni A."/>
            <person name="Kanduri K."/>
            <person name="Joly R."/>
            <person name="Malzac A."/>
            <person name="Laehdesmaeki H."/>
            <person name="Lahesmaa R."/>
            <person name="Yamasaki S."/>
            <person name="Saito T."/>
            <person name="Malissen M."/>
            <person name="Aebersold R."/>
            <person name="Gstaiger M."/>
            <person name="Malissen B."/>
        </authorList>
    </citation>
    <scope>INTERACTION WITH CD6</scope>
</reference>
<evidence type="ECO:0000250" key="1"/>
<evidence type="ECO:0000250" key="2">
    <source>
        <dbReference type="UniProtKB" id="Q13094"/>
    </source>
</evidence>
<evidence type="ECO:0000255" key="3">
    <source>
        <dbReference type="PROSITE-ProRule" id="PRU00191"/>
    </source>
</evidence>
<evidence type="ECO:0000256" key="4">
    <source>
        <dbReference type="SAM" id="MobiDB-lite"/>
    </source>
</evidence>
<evidence type="ECO:0000269" key="5">
    <source>
    </source>
</evidence>
<evidence type="ECO:0000269" key="6">
    <source>
    </source>
</evidence>
<evidence type="ECO:0000269" key="7">
    <source>
    </source>
</evidence>
<evidence type="ECO:0000269" key="8">
    <source>
    </source>
</evidence>
<evidence type="ECO:0000269" key="9">
    <source>
    </source>
</evidence>
<evidence type="ECO:0000269" key="10">
    <source>
    </source>
</evidence>
<evidence type="ECO:0000305" key="11"/>
<evidence type="ECO:0007744" key="12">
    <source>
    </source>
</evidence>
<evidence type="ECO:0007744" key="13">
    <source>
    </source>
</evidence>
<evidence type="ECO:0007829" key="14">
    <source>
        <dbReference type="PDB" id="1OEB"/>
    </source>
</evidence>
<keyword id="KW-0002">3D-structure</keyword>
<keyword id="KW-0963">Cytoplasm</keyword>
<keyword id="KW-0597">Phosphoprotein</keyword>
<keyword id="KW-1185">Reference proteome</keyword>
<keyword id="KW-0727">SH2 domain</keyword>
<dbReference type="EMBL" id="U20159">
    <property type="protein sequence ID" value="AAC52189.1"/>
    <property type="molecule type" value="mRNA"/>
</dbReference>
<dbReference type="EMBL" id="AK036727">
    <property type="protein sequence ID" value="BAC29553.1"/>
    <property type="molecule type" value="mRNA"/>
</dbReference>
<dbReference type="EMBL" id="AK170491">
    <property type="protein sequence ID" value="BAE41833.1"/>
    <property type="molecule type" value="mRNA"/>
</dbReference>
<dbReference type="EMBL" id="CH466604">
    <property type="protein sequence ID" value="EDL23730.1"/>
    <property type="molecule type" value="Genomic_DNA"/>
</dbReference>
<dbReference type="EMBL" id="BC006948">
    <property type="protein sequence ID" value="AAH06948.1"/>
    <property type="molecule type" value="mRNA"/>
</dbReference>
<dbReference type="CCDS" id="CCDS48768.1"/>
<dbReference type="PIR" id="B56110">
    <property type="entry name" value="B56110"/>
</dbReference>
<dbReference type="RefSeq" id="NP_034826.2">
    <property type="nucleotide sequence ID" value="NM_010696.3"/>
</dbReference>
<dbReference type="PDB" id="1OEB">
    <property type="method" value="X-ray"/>
    <property type="resolution" value="1.76 A"/>
    <property type="chains" value="C/D=231-243"/>
</dbReference>
<dbReference type="PDB" id="2ETZ">
    <property type="method" value="NMR"/>
    <property type="chains" value="B=143-148"/>
</dbReference>
<dbReference type="PDB" id="2EU0">
    <property type="method" value="NMR"/>
    <property type="chains" value="B=143-148"/>
</dbReference>
<dbReference type="PDBsum" id="1OEB"/>
<dbReference type="PDBsum" id="2ETZ"/>
<dbReference type="PDBsum" id="2EU0"/>
<dbReference type="SMR" id="Q60787"/>
<dbReference type="BioGRID" id="201124">
    <property type="interactions" value="3"/>
</dbReference>
<dbReference type="CORUM" id="Q60787"/>
<dbReference type="ELM" id="Q60787"/>
<dbReference type="FunCoup" id="Q60787">
    <property type="interactions" value="719"/>
</dbReference>
<dbReference type="IntAct" id="Q60787">
    <property type="interactions" value="28"/>
</dbReference>
<dbReference type="MINT" id="Q60787"/>
<dbReference type="STRING" id="10090.ENSMUSP00000056621"/>
<dbReference type="iPTMnet" id="Q60787"/>
<dbReference type="PhosphoSitePlus" id="Q60787"/>
<dbReference type="jPOST" id="Q60787"/>
<dbReference type="PaxDb" id="10090-ENSMUSP00000056621"/>
<dbReference type="ProteomicsDB" id="286182"/>
<dbReference type="Antibodypedia" id="3884">
    <property type="antibodies" value="713 antibodies from 43 providers"/>
</dbReference>
<dbReference type="DNASU" id="16822"/>
<dbReference type="Ensembl" id="ENSMUST00000052413.12">
    <property type="protein sequence ID" value="ENSMUSP00000056621.6"/>
    <property type="gene ID" value="ENSMUSG00000002699.14"/>
</dbReference>
<dbReference type="GeneID" id="16822"/>
<dbReference type="KEGG" id="mmu:16822"/>
<dbReference type="UCSC" id="uc007ikv.1">
    <property type="organism name" value="mouse"/>
</dbReference>
<dbReference type="AGR" id="MGI:1321402"/>
<dbReference type="CTD" id="3937"/>
<dbReference type="MGI" id="MGI:1321402">
    <property type="gene designation" value="Lcp2"/>
</dbReference>
<dbReference type="VEuPathDB" id="HostDB:ENSMUSG00000002699"/>
<dbReference type="eggNOG" id="ENOG502QV3T">
    <property type="taxonomic scope" value="Eukaryota"/>
</dbReference>
<dbReference type="GeneTree" id="ENSGT00940000156835"/>
<dbReference type="InParanoid" id="Q60787"/>
<dbReference type="OMA" id="GSRNQCM"/>
<dbReference type="OrthoDB" id="9934029at2759"/>
<dbReference type="Reactome" id="R-MMU-114604">
    <property type="pathway name" value="GPVI-mediated activation cascade"/>
</dbReference>
<dbReference type="Reactome" id="R-MMU-202433">
    <property type="pathway name" value="Generation of second messenger molecules"/>
</dbReference>
<dbReference type="Reactome" id="R-MMU-2424491">
    <property type="pathway name" value="DAP12 signaling"/>
</dbReference>
<dbReference type="Reactome" id="R-MMU-2871796">
    <property type="pathway name" value="FCERI mediated MAPK activation"/>
</dbReference>
<dbReference type="Reactome" id="R-MMU-2871809">
    <property type="pathway name" value="FCERI mediated Ca+2 mobilization"/>
</dbReference>
<dbReference type="BioGRID-ORCS" id="16822">
    <property type="hits" value="1 hit in 75 CRISPR screens"/>
</dbReference>
<dbReference type="EvolutionaryTrace" id="Q60787"/>
<dbReference type="PRO" id="PR:Q60787"/>
<dbReference type="Proteomes" id="UP000000589">
    <property type="component" value="Chromosome 11"/>
</dbReference>
<dbReference type="RNAct" id="Q60787">
    <property type="molecule type" value="protein"/>
</dbReference>
<dbReference type="Bgee" id="ENSMUSG00000002699">
    <property type="expression patterns" value="Expressed in granulocyte and 123 other cell types or tissues"/>
</dbReference>
<dbReference type="ExpressionAtlas" id="Q60787">
    <property type="expression patterns" value="baseline and differential"/>
</dbReference>
<dbReference type="GO" id="GO:0005911">
    <property type="term" value="C:cell-cell junction"/>
    <property type="evidence" value="ECO:0000314"/>
    <property type="project" value="MGI"/>
</dbReference>
<dbReference type="GO" id="GO:0005829">
    <property type="term" value="C:cytosol"/>
    <property type="evidence" value="ECO:0000304"/>
    <property type="project" value="Reactome"/>
</dbReference>
<dbReference type="GO" id="GO:0044853">
    <property type="term" value="C:plasma membrane raft"/>
    <property type="evidence" value="ECO:0007669"/>
    <property type="project" value="Ensembl"/>
</dbReference>
<dbReference type="GO" id="GO:0036398">
    <property type="term" value="C:TCR signalosome"/>
    <property type="evidence" value="ECO:0007669"/>
    <property type="project" value="Ensembl"/>
</dbReference>
<dbReference type="GO" id="GO:0045576">
    <property type="term" value="P:mast cell activation"/>
    <property type="evidence" value="ECO:0000315"/>
    <property type="project" value="MGI"/>
</dbReference>
<dbReference type="GO" id="GO:0050852">
    <property type="term" value="P:T cell receptor signaling pathway"/>
    <property type="evidence" value="ECO:0007669"/>
    <property type="project" value="Ensembl"/>
</dbReference>
<dbReference type="CDD" id="cd09522">
    <property type="entry name" value="SAM_SLP76"/>
    <property type="match status" value="1"/>
</dbReference>
<dbReference type="CDD" id="cd09929">
    <property type="entry name" value="SH2_BLNK_SLP-76"/>
    <property type="match status" value="1"/>
</dbReference>
<dbReference type="FunFam" id="3.30.505.10:FF:000016">
    <property type="entry name" value="B-cell linker protein isoform 2"/>
    <property type="match status" value="1"/>
</dbReference>
<dbReference type="FunFam" id="1.10.150.50:FF:000051">
    <property type="entry name" value="Lymphocyte cytosolic protein 2"/>
    <property type="match status" value="1"/>
</dbReference>
<dbReference type="Gene3D" id="3.30.505.10">
    <property type="entry name" value="SH2 domain"/>
    <property type="match status" value="1"/>
</dbReference>
<dbReference type="Gene3D" id="1.10.150.50">
    <property type="entry name" value="Transcription Factor, Ets-1"/>
    <property type="match status" value="1"/>
</dbReference>
<dbReference type="IDEAL" id="IID50090"/>
<dbReference type="InterPro" id="IPR051751">
    <property type="entry name" value="Immunoreceptor_sig_adapters"/>
</dbReference>
<dbReference type="InterPro" id="IPR001660">
    <property type="entry name" value="SAM"/>
</dbReference>
<dbReference type="InterPro" id="IPR013761">
    <property type="entry name" value="SAM/pointed_sf"/>
</dbReference>
<dbReference type="InterPro" id="IPR000980">
    <property type="entry name" value="SH2"/>
</dbReference>
<dbReference type="InterPro" id="IPR036860">
    <property type="entry name" value="SH2_dom_sf"/>
</dbReference>
<dbReference type="PANTHER" id="PTHR14098:SF1">
    <property type="entry name" value="LYMPHOCYTE CYTOSOLIC PROTEIN 2"/>
    <property type="match status" value="1"/>
</dbReference>
<dbReference type="PANTHER" id="PTHR14098">
    <property type="entry name" value="SH2 DOMAIN CONTAINING PROTEIN"/>
    <property type="match status" value="1"/>
</dbReference>
<dbReference type="Pfam" id="PF07647">
    <property type="entry name" value="SAM_2"/>
    <property type="match status" value="1"/>
</dbReference>
<dbReference type="Pfam" id="PF00017">
    <property type="entry name" value="SH2"/>
    <property type="match status" value="1"/>
</dbReference>
<dbReference type="SMART" id="SM00454">
    <property type="entry name" value="SAM"/>
    <property type="match status" value="1"/>
</dbReference>
<dbReference type="SMART" id="SM00252">
    <property type="entry name" value="SH2"/>
    <property type="match status" value="1"/>
</dbReference>
<dbReference type="SUPFAM" id="SSF47769">
    <property type="entry name" value="SAM/Pointed domain"/>
    <property type="match status" value="1"/>
</dbReference>
<dbReference type="SUPFAM" id="SSF55550">
    <property type="entry name" value="SH2 domain"/>
    <property type="match status" value="1"/>
</dbReference>
<dbReference type="PROSITE" id="PS50001">
    <property type="entry name" value="SH2"/>
    <property type="match status" value="1"/>
</dbReference>
<name>LCP2_MOUSE</name>